<organism>
    <name type="scientific">Escherichia coli (strain ATCC 8739 / DSM 1576 / NBRC 3972 / NCIMB 8545 / WDCM 00012 / Crooks)</name>
    <dbReference type="NCBI Taxonomy" id="481805"/>
    <lineage>
        <taxon>Bacteria</taxon>
        <taxon>Pseudomonadati</taxon>
        <taxon>Pseudomonadota</taxon>
        <taxon>Gammaproteobacteria</taxon>
        <taxon>Enterobacterales</taxon>
        <taxon>Enterobacteriaceae</taxon>
        <taxon>Escherichia</taxon>
    </lineage>
</organism>
<name>COAD_ECOLC</name>
<accession>B1IZF9</accession>
<comment type="function">
    <text evidence="1">Reversibly transfers an adenylyl group from ATP to 4'-phosphopantetheine, yielding dephospho-CoA (dPCoA) and pyrophosphate.</text>
</comment>
<comment type="catalytic activity">
    <reaction evidence="1">
        <text>(R)-4'-phosphopantetheine + ATP + H(+) = 3'-dephospho-CoA + diphosphate</text>
        <dbReference type="Rhea" id="RHEA:19801"/>
        <dbReference type="ChEBI" id="CHEBI:15378"/>
        <dbReference type="ChEBI" id="CHEBI:30616"/>
        <dbReference type="ChEBI" id="CHEBI:33019"/>
        <dbReference type="ChEBI" id="CHEBI:57328"/>
        <dbReference type="ChEBI" id="CHEBI:61723"/>
        <dbReference type="EC" id="2.7.7.3"/>
    </reaction>
</comment>
<comment type="cofactor">
    <cofactor evidence="1">
        <name>Mg(2+)</name>
        <dbReference type="ChEBI" id="CHEBI:18420"/>
    </cofactor>
</comment>
<comment type="pathway">
    <text evidence="1">Cofactor biosynthesis; coenzyme A biosynthesis; CoA from (R)-pantothenate: step 4/5.</text>
</comment>
<comment type="subunit">
    <text evidence="1">Homohexamer.</text>
</comment>
<comment type="subcellular location">
    <subcellularLocation>
        <location evidence="1">Cytoplasm</location>
    </subcellularLocation>
</comment>
<comment type="similarity">
    <text evidence="1">Belongs to the bacterial CoaD family.</text>
</comment>
<protein>
    <recommendedName>
        <fullName evidence="1">Phosphopantetheine adenylyltransferase</fullName>
        <ecNumber evidence="1">2.7.7.3</ecNumber>
    </recommendedName>
    <alternativeName>
        <fullName evidence="1">Dephospho-CoA pyrophosphorylase</fullName>
    </alternativeName>
    <alternativeName>
        <fullName evidence="1">Pantetheine-phosphate adenylyltransferase</fullName>
        <shortName evidence="1">PPAT</shortName>
    </alternativeName>
</protein>
<dbReference type="EC" id="2.7.7.3" evidence="1"/>
<dbReference type="EMBL" id="CP000946">
    <property type="protein sequence ID" value="ACA75763.1"/>
    <property type="molecule type" value="Genomic_DNA"/>
</dbReference>
<dbReference type="RefSeq" id="WP_001171866.1">
    <property type="nucleotide sequence ID" value="NZ_MTFT01000034.1"/>
</dbReference>
<dbReference type="SMR" id="B1IZF9"/>
<dbReference type="GeneID" id="75202203"/>
<dbReference type="KEGG" id="ecl:EcolC_0077"/>
<dbReference type="HOGENOM" id="CLU_100149_0_1_6"/>
<dbReference type="UniPathway" id="UPA00241">
    <property type="reaction ID" value="UER00355"/>
</dbReference>
<dbReference type="GO" id="GO:0005737">
    <property type="term" value="C:cytoplasm"/>
    <property type="evidence" value="ECO:0007669"/>
    <property type="project" value="UniProtKB-SubCell"/>
</dbReference>
<dbReference type="GO" id="GO:0005524">
    <property type="term" value="F:ATP binding"/>
    <property type="evidence" value="ECO:0007669"/>
    <property type="project" value="UniProtKB-KW"/>
</dbReference>
<dbReference type="GO" id="GO:0004595">
    <property type="term" value="F:pantetheine-phosphate adenylyltransferase activity"/>
    <property type="evidence" value="ECO:0007669"/>
    <property type="project" value="UniProtKB-UniRule"/>
</dbReference>
<dbReference type="GO" id="GO:0015937">
    <property type="term" value="P:coenzyme A biosynthetic process"/>
    <property type="evidence" value="ECO:0007669"/>
    <property type="project" value="UniProtKB-UniRule"/>
</dbReference>
<dbReference type="CDD" id="cd02163">
    <property type="entry name" value="PPAT"/>
    <property type="match status" value="1"/>
</dbReference>
<dbReference type="FunFam" id="3.40.50.620:FF:000012">
    <property type="entry name" value="Phosphopantetheine adenylyltransferase"/>
    <property type="match status" value="1"/>
</dbReference>
<dbReference type="Gene3D" id="3.40.50.620">
    <property type="entry name" value="HUPs"/>
    <property type="match status" value="1"/>
</dbReference>
<dbReference type="HAMAP" id="MF_00151">
    <property type="entry name" value="PPAT_bact"/>
    <property type="match status" value="1"/>
</dbReference>
<dbReference type="InterPro" id="IPR004821">
    <property type="entry name" value="Cyt_trans-like"/>
</dbReference>
<dbReference type="InterPro" id="IPR001980">
    <property type="entry name" value="PPAT"/>
</dbReference>
<dbReference type="InterPro" id="IPR014729">
    <property type="entry name" value="Rossmann-like_a/b/a_fold"/>
</dbReference>
<dbReference type="NCBIfam" id="TIGR01510">
    <property type="entry name" value="coaD_prev_kdtB"/>
    <property type="match status" value="1"/>
</dbReference>
<dbReference type="NCBIfam" id="TIGR00125">
    <property type="entry name" value="cyt_tran_rel"/>
    <property type="match status" value="1"/>
</dbReference>
<dbReference type="PANTHER" id="PTHR21342">
    <property type="entry name" value="PHOSPHOPANTETHEINE ADENYLYLTRANSFERASE"/>
    <property type="match status" value="1"/>
</dbReference>
<dbReference type="PANTHER" id="PTHR21342:SF1">
    <property type="entry name" value="PHOSPHOPANTETHEINE ADENYLYLTRANSFERASE"/>
    <property type="match status" value="1"/>
</dbReference>
<dbReference type="Pfam" id="PF01467">
    <property type="entry name" value="CTP_transf_like"/>
    <property type="match status" value="1"/>
</dbReference>
<dbReference type="PRINTS" id="PR01020">
    <property type="entry name" value="LPSBIOSNTHSS"/>
</dbReference>
<dbReference type="SUPFAM" id="SSF52374">
    <property type="entry name" value="Nucleotidylyl transferase"/>
    <property type="match status" value="1"/>
</dbReference>
<reference key="1">
    <citation type="submission" date="2008-02" db="EMBL/GenBank/DDBJ databases">
        <title>Complete sequence of Escherichia coli C str. ATCC 8739.</title>
        <authorList>
            <person name="Copeland A."/>
            <person name="Lucas S."/>
            <person name="Lapidus A."/>
            <person name="Glavina del Rio T."/>
            <person name="Dalin E."/>
            <person name="Tice H."/>
            <person name="Bruce D."/>
            <person name="Goodwin L."/>
            <person name="Pitluck S."/>
            <person name="Kiss H."/>
            <person name="Brettin T."/>
            <person name="Detter J.C."/>
            <person name="Han C."/>
            <person name="Kuske C.R."/>
            <person name="Schmutz J."/>
            <person name="Larimer F."/>
            <person name="Land M."/>
            <person name="Hauser L."/>
            <person name="Kyrpides N."/>
            <person name="Mikhailova N."/>
            <person name="Ingram L."/>
            <person name="Richardson P."/>
        </authorList>
    </citation>
    <scope>NUCLEOTIDE SEQUENCE [LARGE SCALE GENOMIC DNA]</scope>
    <source>
        <strain>ATCC 8739 / DSM 1576 / NBRC 3972 / NCIMB 8545 / WDCM 00012 / Crooks</strain>
    </source>
</reference>
<keyword id="KW-0067">ATP-binding</keyword>
<keyword id="KW-0173">Coenzyme A biosynthesis</keyword>
<keyword id="KW-0963">Cytoplasm</keyword>
<keyword id="KW-0460">Magnesium</keyword>
<keyword id="KW-0547">Nucleotide-binding</keyword>
<keyword id="KW-0548">Nucleotidyltransferase</keyword>
<keyword id="KW-0808">Transferase</keyword>
<feature type="chain" id="PRO_1000076764" description="Phosphopantetheine adenylyltransferase">
    <location>
        <begin position="1"/>
        <end position="159"/>
    </location>
</feature>
<feature type="binding site" evidence="1">
    <location>
        <begin position="10"/>
        <end position="11"/>
    </location>
    <ligand>
        <name>ATP</name>
        <dbReference type="ChEBI" id="CHEBI:30616"/>
    </ligand>
</feature>
<feature type="binding site" evidence="1">
    <location>
        <position position="10"/>
    </location>
    <ligand>
        <name>substrate</name>
    </ligand>
</feature>
<feature type="binding site" evidence="1">
    <location>
        <position position="18"/>
    </location>
    <ligand>
        <name>ATP</name>
        <dbReference type="ChEBI" id="CHEBI:30616"/>
    </ligand>
</feature>
<feature type="binding site" evidence="1">
    <location>
        <position position="42"/>
    </location>
    <ligand>
        <name>substrate</name>
    </ligand>
</feature>
<feature type="binding site" evidence="1">
    <location>
        <position position="74"/>
    </location>
    <ligand>
        <name>substrate</name>
    </ligand>
</feature>
<feature type="binding site" evidence="1">
    <location>
        <position position="88"/>
    </location>
    <ligand>
        <name>substrate</name>
    </ligand>
</feature>
<feature type="binding site" evidence="1">
    <location>
        <begin position="89"/>
        <end position="91"/>
    </location>
    <ligand>
        <name>ATP</name>
        <dbReference type="ChEBI" id="CHEBI:30616"/>
    </ligand>
</feature>
<feature type="binding site" evidence="1">
    <location>
        <position position="99"/>
    </location>
    <ligand>
        <name>ATP</name>
        <dbReference type="ChEBI" id="CHEBI:30616"/>
    </ligand>
</feature>
<feature type="binding site" evidence="1">
    <location>
        <begin position="124"/>
        <end position="130"/>
    </location>
    <ligand>
        <name>ATP</name>
        <dbReference type="ChEBI" id="CHEBI:30616"/>
    </ligand>
</feature>
<feature type="site" description="Transition state stabilizer" evidence="1">
    <location>
        <position position="18"/>
    </location>
</feature>
<evidence type="ECO:0000255" key="1">
    <source>
        <dbReference type="HAMAP-Rule" id="MF_00151"/>
    </source>
</evidence>
<sequence>MQKRAIYPGTFDPITNGHIDIVTRATQMFDHVILAIAASPSKKPMFTLEERVALAQQATAHLGNVEVVGFSDLMANFARNQHATVLIRGLRAVADFEYEMQLAHMNRHLMPELESVFLMPSKEWSFISSSLVKEVARHQGDVTHFLPENVHQALMAKLA</sequence>
<gene>
    <name evidence="1" type="primary">coaD</name>
    <name type="ordered locus">EcolC_0077</name>
</gene>
<proteinExistence type="inferred from homology"/>